<reference key="1">
    <citation type="journal article" date="1998" name="Nature">
        <title>The complete genome of the hyperthermophilic bacterium Aquifex aeolicus.</title>
        <authorList>
            <person name="Deckert G."/>
            <person name="Warren P.V."/>
            <person name="Gaasterland T."/>
            <person name="Young W.G."/>
            <person name="Lenox A.L."/>
            <person name="Graham D.E."/>
            <person name="Overbeek R."/>
            <person name="Snead M.A."/>
            <person name="Keller M."/>
            <person name="Aujay M."/>
            <person name="Huber R."/>
            <person name="Feldman R.A."/>
            <person name="Short J.M."/>
            <person name="Olsen G.J."/>
            <person name="Swanson R.V."/>
        </authorList>
    </citation>
    <scope>NUCLEOTIDE SEQUENCE [LARGE SCALE GENOMIC DNA]</scope>
    <source>
        <strain>VF5</strain>
    </source>
</reference>
<feature type="chain" id="PRO_0000158080" description="Reverse gyrase 1">
    <location>
        <begin position="1"/>
        <end position="1146"/>
    </location>
</feature>
<feature type="domain" description="Helicase ATP-binding" evidence="1">
    <location>
        <begin position="83"/>
        <end position="240"/>
    </location>
</feature>
<feature type="domain" description="Helicase C-terminal" evidence="1">
    <location>
        <begin position="412"/>
        <end position="565"/>
    </location>
</feature>
<feature type="domain" description="Toprim" evidence="1">
    <location>
        <begin position="596"/>
        <end position="728"/>
    </location>
</feature>
<feature type="domain" description="Topo IA-type catalytic" evidence="3">
    <location>
        <begin position="744"/>
        <end position="1142"/>
    </location>
</feature>
<feature type="zinc finger region" description="RG N-terminal-type" evidence="2">
    <location>
        <begin position="1"/>
        <end position="38"/>
    </location>
</feature>
<feature type="region of interest" description="Topoisomerase I" evidence="1">
    <location>
        <begin position="592"/>
        <end position="1146"/>
    </location>
</feature>
<feature type="short sequence motif" description="DEAD box" evidence="1">
    <location>
        <begin position="197"/>
        <end position="200"/>
    </location>
</feature>
<feature type="active site" description="O-(5'-phospho-DNA)-tyrosine intermediate" evidence="3">
    <location>
        <position position="891"/>
    </location>
</feature>
<feature type="binding site" evidence="1">
    <location>
        <position position="10"/>
    </location>
    <ligand>
        <name>Zn(2+)</name>
        <dbReference type="ChEBI" id="CHEBI:29105"/>
    </ligand>
</feature>
<feature type="binding site" evidence="1">
    <location>
        <position position="13"/>
    </location>
    <ligand>
        <name>Zn(2+)</name>
        <dbReference type="ChEBI" id="CHEBI:29105"/>
    </ligand>
</feature>
<feature type="binding site" evidence="1">
    <location>
        <position position="28"/>
    </location>
    <ligand>
        <name>Zn(2+)</name>
        <dbReference type="ChEBI" id="CHEBI:29105"/>
    </ligand>
</feature>
<feature type="binding site" evidence="1">
    <location>
        <position position="31"/>
    </location>
    <ligand>
        <name>Zn(2+)</name>
        <dbReference type="ChEBI" id="CHEBI:29105"/>
    </ligand>
</feature>
<feature type="binding site" evidence="1">
    <location>
        <position position="79"/>
    </location>
    <ligand>
        <name>ATP</name>
        <dbReference type="ChEBI" id="CHEBI:30616"/>
    </ligand>
</feature>
<feature type="binding site" evidence="1">
    <location>
        <begin position="96"/>
        <end position="103"/>
    </location>
    <ligand>
        <name>ATP</name>
        <dbReference type="ChEBI" id="CHEBI:30616"/>
    </ligand>
</feature>
<feature type="binding site" evidence="1">
    <location>
        <position position="602"/>
    </location>
    <ligand>
        <name>Mg(2+)</name>
        <dbReference type="ChEBI" id="CHEBI:18420"/>
        <note>catalytic</note>
    </ligand>
</feature>
<feature type="binding site" evidence="1">
    <location>
        <position position="697"/>
    </location>
    <ligand>
        <name>Mg(2+)</name>
        <dbReference type="ChEBI" id="CHEBI:18420"/>
        <note>catalytic</note>
    </ligand>
</feature>
<organism>
    <name type="scientific">Aquifex aeolicus (strain VF5)</name>
    <dbReference type="NCBI Taxonomy" id="224324"/>
    <lineage>
        <taxon>Bacteria</taxon>
        <taxon>Pseudomonadati</taxon>
        <taxon>Aquificota</taxon>
        <taxon>Aquificia</taxon>
        <taxon>Aquificales</taxon>
        <taxon>Aquificaceae</taxon>
        <taxon>Aquifex</taxon>
    </lineage>
</organism>
<accession>O67037</accession>
<name>RGYR1_AQUAE</name>
<proteinExistence type="inferred from homology"/>
<sequence>MIKAIFDTLCPNCGGEISAERLLKGLPCEKCLPEEVNREEVCQKLENGSFKEFCELLSELKDWEDFFKEILGTSPWSLQKSWARKVFLGRSFAMLAPTGVGKTTFGLSMASYLAKQGKKSYIILPTQLLVEQVSERIKTFGVDEDRLIVWGKLSEKKKKELKERIQKGDFDILITTSMFLYKNYEILPKDFSFIFVDDVDSFLKTAKNVDKVLYLLGFSEEDIHKAFELIRLKEKPNKSEEDWEEIKKRSEELREIAKKKKGVLAVSSATGNPRSNRIKLFRELLGFEVGKPSVLLRNIVETYEETQNLKETLLKRVKEFGKGGLVFVSSDYGREAVEEVKKFLESHGVKAVTYEEDLKLFEKGEAQVAIGISSFKNPLARGIDLPHVVRYAIFYGVPKIRVPLKVETSVSHLLWALLSLRPIILKDEKLKSEVKKVDTWIQRLRRYSFLSDDFVEERPDLKDRIENLRKEVQEFLLREDIVEKIKNSEELTLRLGEEGFELVVADVTGYLQASGRTSRMYAGGLTKGLSHVLVDDRRAFKNLEKKVRWFNQDINFKKIEEVDLKEVLREIDEDRKKVREILEGKVKAEQKEHVKPVLVVVESPNKARTIANFFGKPMGRKIGGIDVLEVMVGDLYIMITASLGHVFDLVKDKEFHGVIAKNGEYVPIYEVIEGKENIVKGLRELAQEVDTVLIGTDPDTEGEKIGWDLGALLSPYIPNVERIEFHEVTRKAIKHAVENPRDFNENLVKAQLVRRIADRWVGFEVSRIVQQAFDKHWLSGGRVQIPVLGWIIEREKLYRKKKHVVQITFKENGRWLRLGFEFQDKKEAKEFYENLKEIDVEVLEEREELKNPPPPFTTDTMLKEASDRYRISVPKLMQLAQELFEYGLITYHRTDSTRVSDVGIGVAKEWISEELGKELFYPRVWGEGGAHECIRPTKPLDVEDLRSMMLAGQLQNLTREHLLLYELIFKRFMASQMKPVKVKTKKVKVKALGREQELILTTEILEEGFNKVYPLELQPDLKGSVYVEDKKELKSVPMAYLYTQGSLVEEMKRRGIGRPSTYATIVSKLLERGYVIERHGFLIPTKLGKQVYEFLKSREKIMPFVSEEFTRKLEELMDKVEEGKEDYLQVLDELYKKVNEFEKANV</sequence>
<evidence type="ECO:0000255" key="1">
    <source>
        <dbReference type="HAMAP-Rule" id="MF_01125"/>
    </source>
</evidence>
<evidence type="ECO:0000255" key="2">
    <source>
        <dbReference type="PROSITE-ProRule" id="PRU01380"/>
    </source>
</evidence>
<evidence type="ECO:0000255" key="3">
    <source>
        <dbReference type="PROSITE-ProRule" id="PRU01383"/>
    </source>
</evidence>
<evidence type="ECO:0000303" key="4">
    <source>
    </source>
</evidence>
<protein>
    <recommendedName>
        <fullName evidence="1">Reverse gyrase 1</fullName>
        <ecNumber evidence="1">5.6.2.-</ecNumber>
    </recommendedName>
</protein>
<keyword id="KW-0067">ATP-binding</keyword>
<keyword id="KW-0963">Cytoplasm</keyword>
<keyword id="KW-0238">DNA-binding</keyword>
<keyword id="KW-0413">Isomerase</keyword>
<keyword id="KW-0460">Magnesium</keyword>
<keyword id="KW-0479">Metal-binding</keyword>
<keyword id="KW-0547">Nucleotide-binding</keyword>
<keyword id="KW-1185">Reference proteome</keyword>
<keyword id="KW-0799">Topoisomerase</keyword>
<keyword id="KW-0862">Zinc</keyword>
<keyword id="KW-0863">Zinc-finger</keyword>
<dbReference type="EC" id="5.6.2.-" evidence="1"/>
<dbReference type="EMBL" id="AE000657">
    <property type="protein sequence ID" value="AAC07000.1"/>
    <property type="molecule type" value="Genomic_DNA"/>
</dbReference>
<dbReference type="PIR" id="B70376">
    <property type="entry name" value="B70376"/>
</dbReference>
<dbReference type="RefSeq" id="NP_213599.1">
    <property type="nucleotide sequence ID" value="NC_000918.1"/>
</dbReference>
<dbReference type="RefSeq" id="WP_010880537.1">
    <property type="nucleotide sequence ID" value="NC_000918.1"/>
</dbReference>
<dbReference type="SMR" id="O67037"/>
<dbReference type="STRING" id="224324.aq_886"/>
<dbReference type="EnsemblBacteria" id="AAC07000">
    <property type="protein sequence ID" value="AAC07000"/>
    <property type="gene ID" value="aq_886"/>
</dbReference>
<dbReference type="KEGG" id="aae:aq_886"/>
<dbReference type="PATRIC" id="fig|224324.8.peg.689"/>
<dbReference type="eggNOG" id="COG1110">
    <property type="taxonomic scope" value="Bacteria"/>
</dbReference>
<dbReference type="HOGENOM" id="CLU_002886_0_0_0"/>
<dbReference type="InParanoid" id="O67037"/>
<dbReference type="OrthoDB" id="9804262at2"/>
<dbReference type="Proteomes" id="UP000000798">
    <property type="component" value="Chromosome"/>
</dbReference>
<dbReference type="GO" id="GO:0005737">
    <property type="term" value="C:cytoplasm"/>
    <property type="evidence" value="ECO:0007669"/>
    <property type="project" value="UniProtKB-SubCell"/>
</dbReference>
<dbReference type="GO" id="GO:0005524">
    <property type="term" value="F:ATP binding"/>
    <property type="evidence" value="ECO:0007669"/>
    <property type="project" value="UniProtKB-UniRule"/>
</dbReference>
<dbReference type="GO" id="GO:0016887">
    <property type="term" value="F:ATP hydrolysis activity"/>
    <property type="evidence" value="ECO:0007669"/>
    <property type="project" value="InterPro"/>
</dbReference>
<dbReference type="GO" id="GO:0003677">
    <property type="term" value="F:DNA binding"/>
    <property type="evidence" value="ECO:0007669"/>
    <property type="project" value="UniProtKB-UniRule"/>
</dbReference>
<dbReference type="GO" id="GO:0003918">
    <property type="term" value="F:DNA topoisomerase type II (double strand cut, ATP-hydrolyzing) activity"/>
    <property type="evidence" value="ECO:0007669"/>
    <property type="project" value="UniProtKB-EC"/>
</dbReference>
<dbReference type="GO" id="GO:0160097">
    <property type="term" value="F:reverse gyrase activity"/>
    <property type="evidence" value="ECO:0007669"/>
    <property type="project" value="UniProtKB-UniRule"/>
</dbReference>
<dbReference type="GO" id="GO:0008270">
    <property type="term" value="F:zinc ion binding"/>
    <property type="evidence" value="ECO:0007669"/>
    <property type="project" value="UniProtKB-UniRule"/>
</dbReference>
<dbReference type="GO" id="GO:0006265">
    <property type="term" value="P:DNA topological change"/>
    <property type="evidence" value="ECO:0007669"/>
    <property type="project" value="UniProtKB-UniRule"/>
</dbReference>
<dbReference type="CDD" id="cd17924">
    <property type="entry name" value="DDXDc_reverse_gyrase"/>
    <property type="match status" value="1"/>
</dbReference>
<dbReference type="CDD" id="cd18798">
    <property type="entry name" value="SF2_C_reverse_gyrase"/>
    <property type="match status" value="1"/>
</dbReference>
<dbReference type="CDD" id="cd00186">
    <property type="entry name" value="TOP1Ac"/>
    <property type="match status" value="1"/>
</dbReference>
<dbReference type="Gene3D" id="2.60.510.20">
    <property type="match status" value="1"/>
</dbReference>
<dbReference type="Gene3D" id="3.40.50.140">
    <property type="match status" value="1"/>
</dbReference>
<dbReference type="Gene3D" id="3.40.50.300">
    <property type="entry name" value="P-loop containing nucleotide triphosphate hydrolases"/>
    <property type="match status" value="3"/>
</dbReference>
<dbReference type="Gene3D" id="1.10.460.10">
    <property type="entry name" value="Topoisomerase I, domain 2"/>
    <property type="match status" value="1"/>
</dbReference>
<dbReference type="Gene3D" id="1.10.290.10">
    <property type="entry name" value="Topoisomerase I, domain 4"/>
    <property type="match status" value="1"/>
</dbReference>
<dbReference type="HAMAP" id="MF_01125">
    <property type="entry name" value="Reverse_gyrase"/>
    <property type="match status" value="1"/>
</dbReference>
<dbReference type="InterPro" id="IPR003593">
    <property type="entry name" value="AAA+_ATPase"/>
</dbReference>
<dbReference type="InterPro" id="IPR011545">
    <property type="entry name" value="DEAD/DEAH_box_helicase_dom"/>
</dbReference>
<dbReference type="InterPro" id="IPR014001">
    <property type="entry name" value="Helicase_ATP-bd"/>
</dbReference>
<dbReference type="InterPro" id="IPR027417">
    <property type="entry name" value="P-loop_NTPase"/>
</dbReference>
<dbReference type="InterPro" id="IPR005736">
    <property type="entry name" value="Reverse_gyrase"/>
</dbReference>
<dbReference type="InterPro" id="IPR003601">
    <property type="entry name" value="Topo_IA_2"/>
</dbReference>
<dbReference type="InterPro" id="IPR013497">
    <property type="entry name" value="Topo_IA_cen"/>
</dbReference>
<dbReference type="InterPro" id="IPR013824">
    <property type="entry name" value="Topo_IA_cen_sub1"/>
</dbReference>
<dbReference type="InterPro" id="IPR013826">
    <property type="entry name" value="Topo_IA_cen_sub3"/>
</dbReference>
<dbReference type="InterPro" id="IPR023405">
    <property type="entry name" value="Topo_IA_core_domain"/>
</dbReference>
<dbReference type="InterPro" id="IPR003602">
    <property type="entry name" value="Topo_IA_DNA-bd_dom"/>
</dbReference>
<dbReference type="InterPro" id="IPR006171">
    <property type="entry name" value="TOPRIM_dom"/>
</dbReference>
<dbReference type="InterPro" id="IPR040569">
    <property type="entry name" value="Znf_Rg"/>
</dbReference>
<dbReference type="NCBIfam" id="TIGR01054">
    <property type="entry name" value="rgy"/>
    <property type="match status" value="2"/>
</dbReference>
<dbReference type="PANTHER" id="PTHR43505">
    <property type="entry name" value="REVERSE GYRASE"/>
    <property type="match status" value="1"/>
</dbReference>
<dbReference type="PANTHER" id="PTHR43505:SF1">
    <property type="entry name" value="REVERSE GYRASE"/>
    <property type="match status" value="1"/>
</dbReference>
<dbReference type="Pfam" id="PF00270">
    <property type="entry name" value="DEAD"/>
    <property type="match status" value="1"/>
</dbReference>
<dbReference type="Pfam" id="PF01131">
    <property type="entry name" value="Topoisom_bac"/>
    <property type="match status" value="1"/>
</dbReference>
<dbReference type="Pfam" id="PF01751">
    <property type="entry name" value="Toprim"/>
    <property type="match status" value="1"/>
</dbReference>
<dbReference type="Pfam" id="PF17915">
    <property type="entry name" value="zf_Rg"/>
    <property type="match status" value="1"/>
</dbReference>
<dbReference type="PRINTS" id="PR00417">
    <property type="entry name" value="PRTPISMRASEI"/>
</dbReference>
<dbReference type="SMART" id="SM00382">
    <property type="entry name" value="AAA"/>
    <property type="match status" value="1"/>
</dbReference>
<dbReference type="SMART" id="SM00487">
    <property type="entry name" value="DEXDc"/>
    <property type="match status" value="1"/>
</dbReference>
<dbReference type="SMART" id="SM00437">
    <property type="entry name" value="TOP1Ac"/>
    <property type="match status" value="1"/>
</dbReference>
<dbReference type="SMART" id="SM00436">
    <property type="entry name" value="TOP1Bc"/>
    <property type="match status" value="1"/>
</dbReference>
<dbReference type="SMART" id="SM00493">
    <property type="entry name" value="TOPRIM"/>
    <property type="match status" value="1"/>
</dbReference>
<dbReference type="SUPFAM" id="SSF52540">
    <property type="entry name" value="P-loop containing nucleoside triphosphate hydrolases"/>
    <property type="match status" value="2"/>
</dbReference>
<dbReference type="SUPFAM" id="SSF56712">
    <property type="entry name" value="Prokaryotic type I DNA topoisomerase"/>
    <property type="match status" value="1"/>
</dbReference>
<dbReference type="PROSITE" id="PS51192">
    <property type="entry name" value="HELICASE_ATP_BIND_1"/>
    <property type="match status" value="1"/>
</dbReference>
<dbReference type="PROSITE" id="PS51194">
    <property type="entry name" value="HELICASE_CTER"/>
    <property type="match status" value="1"/>
</dbReference>
<dbReference type="PROSITE" id="PS52039">
    <property type="entry name" value="TOPO_IA_2"/>
    <property type="match status" value="1"/>
</dbReference>
<dbReference type="PROSITE" id="PS50880">
    <property type="entry name" value="TOPRIM"/>
    <property type="match status" value="1"/>
</dbReference>
<dbReference type="PROSITE" id="PS52036">
    <property type="entry name" value="ZF_RG_N"/>
    <property type="match status" value="1"/>
</dbReference>
<comment type="function">
    <text evidence="1">Modifies the topological state of DNA by introducing positive supercoils in an ATP-dependent process, increasing the linking number in steps of +1. Binds to single-stranded DNA, transiently cleaves and then rejoins the ends, introducing a positive supercoil in the process. The scissile phosphodiester is attacked by the catalytic tyrosine of the enzyme, resulting in the formation of a DNA-(5'-phosphotyrosyl)-enzyme intermediate. Probably involved in rewinding DNA strands in regions of the chromosome that have opened up to allow replication, transcription, DNA repair and/or for DNA protection.</text>
</comment>
<comment type="catalytic activity">
    <reaction evidence="1">
        <text>ATP + H2O = ADP + phosphate + H(+)</text>
        <dbReference type="Rhea" id="RHEA:13065"/>
        <dbReference type="ChEBI" id="CHEBI:15377"/>
        <dbReference type="ChEBI" id="CHEBI:15378"/>
        <dbReference type="ChEBI" id="CHEBI:30616"/>
        <dbReference type="ChEBI" id="CHEBI:43474"/>
        <dbReference type="ChEBI" id="CHEBI:456216"/>
    </reaction>
</comment>
<comment type="cofactor">
    <cofactor evidence="1">
        <name>Zn(2+)</name>
        <dbReference type="ChEBI" id="CHEBI:29105"/>
    </cofactor>
    <text evidence="1">Binds 1 zinc ion per subunit.</text>
</comment>
<comment type="cofactor">
    <cofactor evidence="1">
        <name>Mg(2+)</name>
        <dbReference type="ChEBI" id="CHEBI:18420"/>
    </cofactor>
</comment>
<comment type="subunit">
    <text evidence="1">Monomer.</text>
</comment>
<comment type="subcellular location">
    <subcellularLocation>
        <location evidence="1">Cytoplasm</location>
    </subcellularLocation>
</comment>
<comment type="domain">
    <text evidence="1">Introduction of positive supercoils requires the cooperation of both domains. The helicase-like domain probably does not directly unwind DNA, but more likely acts by driving ATP-dependent conformational changes within the whole enzyme. A beta hairpin in the 'latch' region of the N-terminal domain plays a regulatory role in the enzyme, repressing topoisomerase activity in the absence of ATP and preventing the enzyme from acting as an ATP-independent relaxing enzyme; it also helps to coordinate nucleotide hydrolysis by the ATPase domain with the supercoiling activity of the topoisomerase domain.</text>
</comment>
<comment type="miscellaneous">
    <text evidence="1">This enzyme is the only unique feature of hyperthermophilic bacteria/archaea known and seems to be essential for adaptation to life at high temperatures. It may play a role in stabilization of DNA at high temperatures.</text>
</comment>
<comment type="similarity">
    <text evidence="1">In the N-terminal section; belongs to the DEAD box helicase family. DDVD subfamily.</text>
</comment>
<comment type="similarity">
    <text evidence="1">In the C-terminal section; belongs to the type IA topoisomerase family.</text>
</comment>
<gene>
    <name evidence="1" type="primary">rgy1</name>
    <name evidence="4" type="synonym">topG2</name>
    <name type="ordered locus">aq_886</name>
</gene>